<feature type="chain" id="PRO_0000381576" description="Biotin synthase">
    <location>
        <begin position="1"/>
        <end position="360"/>
    </location>
</feature>
<feature type="domain" description="Radical SAM core" evidence="2">
    <location>
        <begin position="58"/>
        <end position="285"/>
    </location>
</feature>
<feature type="region of interest" description="Disordered" evidence="3">
    <location>
        <begin position="1"/>
        <end position="25"/>
    </location>
</feature>
<feature type="region of interest" description="Disordered" evidence="3">
    <location>
        <begin position="340"/>
        <end position="360"/>
    </location>
</feature>
<feature type="binding site" evidence="1">
    <location>
        <position position="73"/>
    </location>
    <ligand>
        <name>[4Fe-4S] cluster</name>
        <dbReference type="ChEBI" id="CHEBI:49883"/>
        <note>4Fe-4S-S-AdoMet</note>
    </ligand>
</feature>
<feature type="binding site" evidence="1">
    <location>
        <position position="77"/>
    </location>
    <ligand>
        <name>[4Fe-4S] cluster</name>
        <dbReference type="ChEBI" id="CHEBI:49883"/>
        <note>4Fe-4S-S-AdoMet</note>
    </ligand>
</feature>
<feature type="binding site" evidence="1">
    <location>
        <position position="80"/>
    </location>
    <ligand>
        <name>[4Fe-4S] cluster</name>
        <dbReference type="ChEBI" id="CHEBI:49883"/>
        <note>4Fe-4S-S-AdoMet</note>
    </ligand>
</feature>
<feature type="binding site" evidence="1">
    <location>
        <position position="117"/>
    </location>
    <ligand>
        <name>[2Fe-2S] cluster</name>
        <dbReference type="ChEBI" id="CHEBI:190135"/>
    </ligand>
</feature>
<feature type="binding site" evidence="1">
    <location>
        <position position="148"/>
    </location>
    <ligand>
        <name>[2Fe-2S] cluster</name>
        <dbReference type="ChEBI" id="CHEBI:190135"/>
    </ligand>
</feature>
<feature type="binding site" evidence="1">
    <location>
        <position position="208"/>
    </location>
    <ligand>
        <name>[2Fe-2S] cluster</name>
        <dbReference type="ChEBI" id="CHEBI:190135"/>
    </ligand>
</feature>
<feature type="binding site" evidence="1">
    <location>
        <position position="280"/>
    </location>
    <ligand>
        <name>[2Fe-2S] cluster</name>
        <dbReference type="ChEBI" id="CHEBI:190135"/>
    </ligand>
</feature>
<gene>
    <name evidence="1" type="primary">bioB</name>
    <name type="ordered locus">RSc0266</name>
</gene>
<proteinExistence type="inferred from homology"/>
<dbReference type="EC" id="2.8.1.6" evidence="1"/>
<dbReference type="EMBL" id="AL646052">
    <property type="protein sequence ID" value="CAD13794.1"/>
    <property type="molecule type" value="Genomic_DNA"/>
</dbReference>
<dbReference type="RefSeq" id="WP_011000233.1">
    <property type="nucleotide sequence ID" value="NC_003295.1"/>
</dbReference>
<dbReference type="SMR" id="Q8Y2R9"/>
<dbReference type="STRING" id="267608.RSc0266"/>
<dbReference type="DNASU" id="1219069"/>
<dbReference type="EnsemblBacteria" id="CAD13794">
    <property type="protein sequence ID" value="CAD13794"/>
    <property type="gene ID" value="RSc0266"/>
</dbReference>
<dbReference type="KEGG" id="rso:RSc0266"/>
<dbReference type="eggNOG" id="COG0502">
    <property type="taxonomic scope" value="Bacteria"/>
</dbReference>
<dbReference type="HOGENOM" id="CLU_033172_1_2_4"/>
<dbReference type="UniPathway" id="UPA00078">
    <property type="reaction ID" value="UER00162"/>
</dbReference>
<dbReference type="Proteomes" id="UP000001436">
    <property type="component" value="Chromosome"/>
</dbReference>
<dbReference type="GO" id="GO:0051537">
    <property type="term" value="F:2 iron, 2 sulfur cluster binding"/>
    <property type="evidence" value="ECO:0007669"/>
    <property type="project" value="UniProtKB-KW"/>
</dbReference>
<dbReference type="GO" id="GO:0051539">
    <property type="term" value="F:4 iron, 4 sulfur cluster binding"/>
    <property type="evidence" value="ECO:0007669"/>
    <property type="project" value="UniProtKB-KW"/>
</dbReference>
<dbReference type="GO" id="GO:0004076">
    <property type="term" value="F:biotin synthase activity"/>
    <property type="evidence" value="ECO:0007669"/>
    <property type="project" value="UniProtKB-UniRule"/>
</dbReference>
<dbReference type="GO" id="GO:0005506">
    <property type="term" value="F:iron ion binding"/>
    <property type="evidence" value="ECO:0007669"/>
    <property type="project" value="UniProtKB-UniRule"/>
</dbReference>
<dbReference type="GO" id="GO:0009102">
    <property type="term" value="P:biotin biosynthetic process"/>
    <property type="evidence" value="ECO:0007669"/>
    <property type="project" value="UniProtKB-UniRule"/>
</dbReference>
<dbReference type="CDD" id="cd01335">
    <property type="entry name" value="Radical_SAM"/>
    <property type="match status" value="1"/>
</dbReference>
<dbReference type="FunFam" id="3.20.20.70:FF:000011">
    <property type="entry name" value="Biotin synthase"/>
    <property type="match status" value="1"/>
</dbReference>
<dbReference type="Gene3D" id="3.20.20.70">
    <property type="entry name" value="Aldolase class I"/>
    <property type="match status" value="1"/>
</dbReference>
<dbReference type="HAMAP" id="MF_01694">
    <property type="entry name" value="BioB"/>
    <property type="match status" value="1"/>
</dbReference>
<dbReference type="InterPro" id="IPR013785">
    <property type="entry name" value="Aldolase_TIM"/>
</dbReference>
<dbReference type="InterPro" id="IPR010722">
    <property type="entry name" value="BATS_dom"/>
</dbReference>
<dbReference type="InterPro" id="IPR002684">
    <property type="entry name" value="Biotin_synth/BioAB"/>
</dbReference>
<dbReference type="InterPro" id="IPR024177">
    <property type="entry name" value="Biotin_synthase"/>
</dbReference>
<dbReference type="InterPro" id="IPR006638">
    <property type="entry name" value="Elp3/MiaA/NifB-like_rSAM"/>
</dbReference>
<dbReference type="InterPro" id="IPR007197">
    <property type="entry name" value="rSAM"/>
</dbReference>
<dbReference type="NCBIfam" id="TIGR00433">
    <property type="entry name" value="bioB"/>
    <property type="match status" value="1"/>
</dbReference>
<dbReference type="PANTHER" id="PTHR22976">
    <property type="entry name" value="BIOTIN SYNTHASE"/>
    <property type="match status" value="1"/>
</dbReference>
<dbReference type="PANTHER" id="PTHR22976:SF2">
    <property type="entry name" value="BIOTIN SYNTHASE, MITOCHONDRIAL"/>
    <property type="match status" value="1"/>
</dbReference>
<dbReference type="Pfam" id="PF06968">
    <property type="entry name" value="BATS"/>
    <property type="match status" value="1"/>
</dbReference>
<dbReference type="Pfam" id="PF04055">
    <property type="entry name" value="Radical_SAM"/>
    <property type="match status" value="1"/>
</dbReference>
<dbReference type="PIRSF" id="PIRSF001619">
    <property type="entry name" value="Biotin_synth"/>
    <property type="match status" value="1"/>
</dbReference>
<dbReference type="SFLD" id="SFLDF00272">
    <property type="entry name" value="biotin_synthase"/>
    <property type="match status" value="1"/>
</dbReference>
<dbReference type="SFLD" id="SFLDS00029">
    <property type="entry name" value="Radical_SAM"/>
    <property type="match status" value="1"/>
</dbReference>
<dbReference type="SMART" id="SM00876">
    <property type="entry name" value="BATS"/>
    <property type="match status" value="1"/>
</dbReference>
<dbReference type="SMART" id="SM00729">
    <property type="entry name" value="Elp3"/>
    <property type="match status" value="1"/>
</dbReference>
<dbReference type="SUPFAM" id="SSF102114">
    <property type="entry name" value="Radical SAM enzymes"/>
    <property type="match status" value="1"/>
</dbReference>
<dbReference type="PROSITE" id="PS51918">
    <property type="entry name" value="RADICAL_SAM"/>
    <property type="match status" value="1"/>
</dbReference>
<name>BIOB_RALN1</name>
<sequence>MQHAPLNFVPDAAKVPPTPGQSPNARWSREAIEALFALPFNDLLFQAQQVHRAHFDANAVQLSTLLSIKTGGCPEDCSYCPQSARYDTGVEAEKLMPIDTVLEAAARAKQNGASRFCMGAAWRNPKPHQLDAVADMVRGVKAMGLETCVTLGMLKQEQAQQLKDAGLDYYNHNLDTAPEFYGEIITTRTYQDRLDTLEHVRDAGINVCCGGIVGLGESRHERAGLVAELANMEPYPDSVPINNLVKVEGTPLAGNEALDPFEFVRTIAVARITMPKAMVRLSAGREAMDDALQALCFMAGANSIFYGEKLLTTDNPEADADRKLLARLGMRVEVQDHLHQAEGAQHSHSSHCHIDITPAD</sequence>
<organism>
    <name type="scientific">Ralstonia nicotianae (strain ATCC BAA-1114 / GMI1000)</name>
    <name type="common">Ralstonia solanacearum</name>
    <dbReference type="NCBI Taxonomy" id="267608"/>
    <lineage>
        <taxon>Bacteria</taxon>
        <taxon>Pseudomonadati</taxon>
        <taxon>Pseudomonadota</taxon>
        <taxon>Betaproteobacteria</taxon>
        <taxon>Burkholderiales</taxon>
        <taxon>Burkholderiaceae</taxon>
        <taxon>Ralstonia</taxon>
        <taxon>Ralstonia solanacearum species complex</taxon>
    </lineage>
</organism>
<reference key="1">
    <citation type="journal article" date="2002" name="Nature">
        <title>Genome sequence of the plant pathogen Ralstonia solanacearum.</title>
        <authorList>
            <person name="Salanoubat M."/>
            <person name="Genin S."/>
            <person name="Artiguenave F."/>
            <person name="Gouzy J."/>
            <person name="Mangenot S."/>
            <person name="Arlat M."/>
            <person name="Billault A."/>
            <person name="Brottier P."/>
            <person name="Camus J.-C."/>
            <person name="Cattolico L."/>
            <person name="Chandler M."/>
            <person name="Choisne N."/>
            <person name="Claudel-Renard C."/>
            <person name="Cunnac S."/>
            <person name="Demange N."/>
            <person name="Gaspin C."/>
            <person name="Lavie M."/>
            <person name="Moisan A."/>
            <person name="Robert C."/>
            <person name="Saurin W."/>
            <person name="Schiex T."/>
            <person name="Siguier P."/>
            <person name="Thebault P."/>
            <person name="Whalen M."/>
            <person name="Wincker P."/>
            <person name="Levy M."/>
            <person name="Weissenbach J."/>
            <person name="Boucher C.A."/>
        </authorList>
    </citation>
    <scope>NUCLEOTIDE SEQUENCE [LARGE SCALE GENOMIC DNA]</scope>
    <source>
        <strain>ATCC BAA-1114 / GMI1000</strain>
    </source>
</reference>
<accession>Q8Y2R9</accession>
<protein>
    <recommendedName>
        <fullName evidence="1">Biotin synthase</fullName>
        <ecNumber evidence="1">2.8.1.6</ecNumber>
    </recommendedName>
</protein>
<evidence type="ECO:0000255" key="1">
    <source>
        <dbReference type="HAMAP-Rule" id="MF_01694"/>
    </source>
</evidence>
<evidence type="ECO:0000255" key="2">
    <source>
        <dbReference type="PROSITE-ProRule" id="PRU01266"/>
    </source>
</evidence>
<evidence type="ECO:0000256" key="3">
    <source>
        <dbReference type="SAM" id="MobiDB-lite"/>
    </source>
</evidence>
<keyword id="KW-0001">2Fe-2S</keyword>
<keyword id="KW-0004">4Fe-4S</keyword>
<keyword id="KW-0093">Biotin biosynthesis</keyword>
<keyword id="KW-0408">Iron</keyword>
<keyword id="KW-0411">Iron-sulfur</keyword>
<keyword id="KW-0479">Metal-binding</keyword>
<keyword id="KW-1185">Reference proteome</keyword>
<keyword id="KW-0949">S-adenosyl-L-methionine</keyword>
<keyword id="KW-0808">Transferase</keyword>
<comment type="function">
    <text evidence="1">Catalyzes the conversion of dethiobiotin (DTB) to biotin by the insertion of a sulfur atom into dethiobiotin via a radical-based mechanism.</text>
</comment>
<comment type="catalytic activity">
    <reaction evidence="1">
        <text>(4R,5S)-dethiobiotin + (sulfur carrier)-SH + 2 reduced [2Fe-2S]-[ferredoxin] + 2 S-adenosyl-L-methionine = (sulfur carrier)-H + biotin + 2 5'-deoxyadenosine + 2 L-methionine + 2 oxidized [2Fe-2S]-[ferredoxin]</text>
        <dbReference type="Rhea" id="RHEA:22060"/>
        <dbReference type="Rhea" id="RHEA-COMP:10000"/>
        <dbReference type="Rhea" id="RHEA-COMP:10001"/>
        <dbReference type="Rhea" id="RHEA-COMP:14737"/>
        <dbReference type="Rhea" id="RHEA-COMP:14739"/>
        <dbReference type="ChEBI" id="CHEBI:17319"/>
        <dbReference type="ChEBI" id="CHEBI:29917"/>
        <dbReference type="ChEBI" id="CHEBI:33737"/>
        <dbReference type="ChEBI" id="CHEBI:33738"/>
        <dbReference type="ChEBI" id="CHEBI:57586"/>
        <dbReference type="ChEBI" id="CHEBI:57844"/>
        <dbReference type="ChEBI" id="CHEBI:59789"/>
        <dbReference type="ChEBI" id="CHEBI:64428"/>
        <dbReference type="ChEBI" id="CHEBI:149473"/>
        <dbReference type="EC" id="2.8.1.6"/>
    </reaction>
</comment>
<comment type="cofactor">
    <cofactor evidence="1">
        <name>[4Fe-4S] cluster</name>
        <dbReference type="ChEBI" id="CHEBI:49883"/>
    </cofactor>
    <text evidence="1">Binds 1 [4Fe-4S] cluster. The cluster is coordinated with 3 cysteines and an exchangeable S-adenosyl-L-methionine.</text>
</comment>
<comment type="cofactor">
    <cofactor evidence="1">
        <name>[2Fe-2S] cluster</name>
        <dbReference type="ChEBI" id="CHEBI:190135"/>
    </cofactor>
    <text evidence="1">Binds 1 [2Fe-2S] cluster. The cluster is coordinated with 3 cysteines and 1 arginine.</text>
</comment>
<comment type="pathway">
    <text evidence="1">Cofactor biosynthesis; biotin biosynthesis; biotin from 7,8-diaminononanoate: step 2/2.</text>
</comment>
<comment type="subunit">
    <text evidence="1">Homodimer.</text>
</comment>
<comment type="similarity">
    <text evidence="1">Belongs to the radical SAM superfamily. Biotin synthase family.</text>
</comment>